<proteinExistence type="inferred from homology"/>
<feature type="chain" id="PRO_0000199394" description="Formate--tetrahydrofolate ligase 2">
    <location>
        <begin position="1"/>
        <end position="557"/>
    </location>
</feature>
<feature type="binding site" evidence="1">
    <location>
        <begin position="66"/>
        <end position="73"/>
    </location>
    <ligand>
        <name>ATP</name>
        <dbReference type="ChEBI" id="CHEBI:30616"/>
    </ligand>
</feature>
<name>FTHS2_STRPM</name>
<organism>
    <name type="scientific">Streptococcus pyogenes serotype M28 (strain MGAS6180)</name>
    <dbReference type="NCBI Taxonomy" id="319701"/>
    <lineage>
        <taxon>Bacteria</taxon>
        <taxon>Bacillati</taxon>
        <taxon>Bacillota</taxon>
        <taxon>Bacilli</taxon>
        <taxon>Lactobacillales</taxon>
        <taxon>Streptococcaceae</taxon>
        <taxon>Streptococcus</taxon>
    </lineage>
</organism>
<evidence type="ECO:0000255" key="1">
    <source>
        <dbReference type="HAMAP-Rule" id="MF_01543"/>
    </source>
</evidence>
<accession>Q48QZ2</accession>
<protein>
    <recommendedName>
        <fullName evidence="1">Formate--tetrahydrofolate ligase 2</fullName>
        <ecNumber evidence="1">6.3.4.3</ecNumber>
    </recommendedName>
    <alternativeName>
        <fullName evidence="1">Formyltetrahydrofolate synthetase 2</fullName>
        <shortName evidence="1">FHS 2</shortName>
        <shortName evidence="1">FTHFS 2</shortName>
    </alternativeName>
</protein>
<keyword id="KW-0067">ATP-binding</keyword>
<keyword id="KW-0436">Ligase</keyword>
<keyword id="KW-0547">Nucleotide-binding</keyword>
<keyword id="KW-0554">One-carbon metabolism</keyword>
<comment type="catalytic activity">
    <reaction evidence="1">
        <text>(6S)-5,6,7,8-tetrahydrofolate + formate + ATP = (6R)-10-formyltetrahydrofolate + ADP + phosphate</text>
        <dbReference type="Rhea" id="RHEA:20221"/>
        <dbReference type="ChEBI" id="CHEBI:15740"/>
        <dbReference type="ChEBI" id="CHEBI:30616"/>
        <dbReference type="ChEBI" id="CHEBI:43474"/>
        <dbReference type="ChEBI" id="CHEBI:57453"/>
        <dbReference type="ChEBI" id="CHEBI:195366"/>
        <dbReference type="ChEBI" id="CHEBI:456216"/>
        <dbReference type="EC" id="6.3.4.3"/>
    </reaction>
</comment>
<comment type="pathway">
    <text evidence="1">One-carbon metabolism; tetrahydrofolate interconversion.</text>
</comment>
<comment type="similarity">
    <text evidence="1">Belongs to the formate--tetrahydrofolate ligase family.</text>
</comment>
<dbReference type="EC" id="6.3.4.3" evidence="1"/>
<dbReference type="EMBL" id="CP000056">
    <property type="protein sequence ID" value="AAX72868.1"/>
    <property type="molecule type" value="Genomic_DNA"/>
</dbReference>
<dbReference type="RefSeq" id="WP_011285250.1">
    <property type="nucleotide sequence ID" value="NC_007296.2"/>
</dbReference>
<dbReference type="SMR" id="Q48QZ2"/>
<dbReference type="KEGG" id="spb:M28_Spy1758"/>
<dbReference type="HOGENOM" id="CLU_003601_3_3_9"/>
<dbReference type="UniPathway" id="UPA00193"/>
<dbReference type="GO" id="GO:0005524">
    <property type="term" value="F:ATP binding"/>
    <property type="evidence" value="ECO:0007669"/>
    <property type="project" value="UniProtKB-UniRule"/>
</dbReference>
<dbReference type="GO" id="GO:0004329">
    <property type="term" value="F:formate-tetrahydrofolate ligase activity"/>
    <property type="evidence" value="ECO:0007669"/>
    <property type="project" value="UniProtKB-UniRule"/>
</dbReference>
<dbReference type="GO" id="GO:0035999">
    <property type="term" value="P:tetrahydrofolate interconversion"/>
    <property type="evidence" value="ECO:0007669"/>
    <property type="project" value="UniProtKB-UniRule"/>
</dbReference>
<dbReference type="CDD" id="cd00477">
    <property type="entry name" value="FTHFS"/>
    <property type="match status" value="1"/>
</dbReference>
<dbReference type="FunFam" id="3.30.1510.10:FF:000001">
    <property type="entry name" value="Formate--tetrahydrofolate ligase"/>
    <property type="match status" value="1"/>
</dbReference>
<dbReference type="FunFam" id="3.10.410.10:FF:000001">
    <property type="entry name" value="Putative formate--tetrahydrofolate ligase"/>
    <property type="match status" value="1"/>
</dbReference>
<dbReference type="Gene3D" id="3.30.1510.10">
    <property type="entry name" value="Domain 2, N(10)-formyltetrahydrofolate synthetase"/>
    <property type="match status" value="1"/>
</dbReference>
<dbReference type="Gene3D" id="3.10.410.10">
    <property type="entry name" value="Formyltetrahydrofolate synthetase, domain 3"/>
    <property type="match status" value="1"/>
</dbReference>
<dbReference type="Gene3D" id="3.40.50.300">
    <property type="entry name" value="P-loop containing nucleotide triphosphate hydrolases"/>
    <property type="match status" value="1"/>
</dbReference>
<dbReference type="HAMAP" id="MF_01543">
    <property type="entry name" value="FTHFS"/>
    <property type="match status" value="1"/>
</dbReference>
<dbReference type="InterPro" id="IPR000559">
    <property type="entry name" value="Formate_THF_ligase"/>
</dbReference>
<dbReference type="InterPro" id="IPR020628">
    <property type="entry name" value="Formate_THF_ligase_CS"/>
</dbReference>
<dbReference type="InterPro" id="IPR027417">
    <property type="entry name" value="P-loop_NTPase"/>
</dbReference>
<dbReference type="NCBIfam" id="NF010030">
    <property type="entry name" value="PRK13505.1"/>
    <property type="match status" value="1"/>
</dbReference>
<dbReference type="Pfam" id="PF01268">
    <property type="entry name" value="FTHFS"/>
    <property type="match status" value="1"/>
</dbReference>
<dbReference type="SUPFAM" id="SSF52540">
    <property type="entry name" value="P-loop containing nucleoside triphosphate hydrolases"/>
    <property type="match status" value="1"/>
</dbReference>
<dbReference type="PROSITE" id="PS00721">
    <property type="entry name" value="FTHFS_1"/>
    <property type="match status" value="1"/>
</dbReference>
<dbReference type="PROSITE" id="PS00722">
    <property type="entry name" value="FTHFS_2"/>
    <property type="match status" value="1"/>
</dbReference>
<reference key="1">
    <citation type="journal article" date="2005" name="J. Infect. Dis.">
        <title>Genome sequence of a serotype M28 strain of group A Streptococcus: potential new insights into puerperal sepsis and bacterial disease specificity.</title>
        <authorList>
            <person name="Green N.M."/>
            <person name="Zhang S."/>
            <person name="Porcella S.F."/>
            <person name="Nagiec M.J."/>
            <person name="Barbian K.D."/>
            <person name="Beres S.B."/>
            <person name="Lefebvre R.B."/>
            <person name="Musser J.M."/>
        </authorList>
    </citation>
    <scope>NUCLEOTIDE SEQUENCE [LARGE SCALE GENOMIC DNA]</scope>
    <source>
        <strain>MGAS6180</strain>
    </source>
</reference>
<sequence>MVLSDIEIANSVTMEPISKVANQLGIDEEALCLYGKYKAKIDARQLVALKDKPDGKLILVTAISPTPAGEGKTTTSVGLVDALSAIGKKAVIALREPSLGPVFGVKGGAAGGGHAQVVPMEDINLHFTGDFHAIGVANNLLAALIDNHIHHGNSLGIDSRRITWKRVVDMNDRQLRHIVDGLQGKVNGVPREDGYDITVASEIMAILCLSENISDLKARLEKIIIGYNYQGEPVTAKDLKAGGALAALLKDAIHPNLVQTLEHTPALIHGGPFANIAHGCNSVLATKLALKYGDYAVTEAGFGADLGAEKFIDIKCRMSGLRPAAVVLVATIRALKMHGGVPKANLATENVQAVVDGLPNLDKHLANIQDVYGLPVVVAINKFPLDTDAELQAVYDACDKRGVDVVISDVWANGGAGGRELAEKVVALAEQDNQFCFVYEEDDSIETKLTKIVTKVYGGKGIRLTPAAKRELADLERLGFGNYPICMAKTQYSFSDDAKKLGAPTDFTVTISNLKVSAGAGFIVALTGAIMTMPGLPKVPASETIDIDEEGNITGLF</sequence>
<gene>
    <name evidence="1" type="primary">fhs2</name>
    <name type="synonym">fhs.2</name>
    <name type="ordered locus">M28_Spy1758</name>
</gene>